<gene>
    <name type="primary">ecpE</name>
    <name type="synonym">matF</name>
    <name type="ordered locus">ECOK1_0276</name>
</gene>
<sequence length="236" mass="26620">MFRRRGVTLTKALLTVVCMLAAPLTQAISVGNLTFSLPSETDFVSKRVVNNNKSARIYRIAISAIDSPGSSELRTRPVDGELLFAPRQLALQAGESEYFKFYYHGPRDNRERYYRVSFREVPTRNLTKRSPSGGEVSTEPVVVMDTILVVRPRQVQFKWSFDQVTGTVSNTGNTWFKLLIKPGCDSTEEEGDAWYLRPGDVVHQPELRQPGNHYLVYNDKFIKISDSCPAKPPSAD</sequence>
<dbReference type="EMBL" id="CP001969">
    <property type="protein sequence ID" value="ADE89015.1"/>
    <property type="molecule type" value="Genomic_DNA"/>
</dbReference>
<dbReference type="RefSeq" id="WP_001295798.1">
    <property type="nucleotide sequence ID" value="NC_017628.1"/>
</dbReference>
<dbReference type="SMR" id="D5CVJ6"/>
<dbReference type="KEGG" id="eih:ECOK1_0276"/>
<dbReference type="PATRIC" id="fig|714962.3.peg.276"/>
<dbReference type="HOGENOM" id="CLU_106652_0_0_6"/>
<dbReference type="Gene3D" id="2.60.40.10">
    <property type="entry name" value="Immunoglobulins"/>
    <property type="match status" value="1"/>
</dbReference>
<dbReference type="InterPro" id="IPR013783">
    <property type="entry name" value="Ig-like_fold"/>
</dbReference>
<dbReference type="InterPro" id="IPR008962">
    <property type="entry name" value="PapD-like_sf"/>
</dbReference>
<dbReference type="SUPFAM" id="SSF49354">
    <property type="entry name" value="PapD-like"/>
    <property type="match status" value="1"/>
</dbReference>
<evidence type="ECO:0000250" key="1"/>
<evidence type="ECO:0000255" key="2"/>
<evidence type="ECO:0000269" key="3">
    <source>
    </source>
</evidence>
<evidence type="ECO:0000305" key="4"/>
<organism>
    <name type="scientific">Escherichia coli O18:K1:H7 (strain IHE3034 / ExPEC)</name>
    <dbReference type="NCBI Taxonomy" id="714962"/>
    <lineage>
        <taxon>Bacteria</taxon>
        <taxon>Pseudomonadati</taxon>
        <taxon>Pseudomonadota</taxon>
        <taxon>Gammaproteobacteria</taxon>
        <taxon>Enterobacterales</taxon>
        <taxon>Enterobacteriaceae</taxon>
        <taxon>Escherichia</taxon>
    </lineage>
</organism>
<keyword id="KW-0143">Chaperone</keyword>
<keyword id="KW-1029">Fimbrium biogenesis</keyword>
<keyword id="KW-0732">Signal</keyword>
<proteinExistence type="inferred from homology"/>
<feature type="signal peptide" evidence="2">
    <location>
        <begin position="1"/>
        <end position="27"/>
    </location>
</feature>
<feature type="chain" id="PRO_0000429540" description="Probable fimbrial chaperone EcpE">
    <location>
        <begin position="28"/>
        <end position="236"/>
    </location>
</feature>
<accession>D5CVJ6</accession>
<comment type="function">
    <text evidence="3">Part of the ecpRABCDE operon, which encodes the E.coli common pilus (ECP). ECP is found in both commensal and pathogenic strains and plays a dual role in early-stage biofilm development and host cell recognition.</text>
</comment>
<comment type="induction">
    <text evidence="1">Negatively regulated by H-NS. Positively regulated by IHF and EcpR (By similarity).</text>
</comment>
<comment type="disruption phenotype">
    <text evidence="3">Mutants do not express ECP and are defective in biofilm formation.</text>
</comment>
<comment type="similarity">
    <text evidence="4">Belongs to the EcpB/EcpE family.</text>
</comment>
<protein>
    <recommendedName>
        <fullName>Probable fimbrial chaperone EcpE</fullName>
    </recommendedName>
    <alternativeName>
        <fullName>Meningitis associated and temperature regulated protein F</fullName>
    </alternativeName>
</protein>
<name>ECPE_ECOKI</name>
<reference key="1">
    <citation type="journal article" date="2010" name="Proc. Natl. Acad. Sci. U.S.A.">
        <title>Identification of protective and broadly conserved vaccine antigens from the genome of extraintestinal pathogenic Escherichia coli.</title>
        <authorList>
            <person name="Moriel D.G."/>
            <person name="Bertoldi I."/>
            <person name="Spagnuolo A."/>
            <person name="Marchi S."/>
            <person name="Rosini R."/>
            <person name="Nesta B."/>
            <person name="Pastorello I."/>
            <person name="Corea V.A."/>
            <person name="Torricelli G."/>
            <person name="Cartocci E."/>
            <person name="Savino S."/>
            <person name="Scarselli M."/>
            <person name="Dobrindt U."/>
            <person name="Hacker J."/>
            <person name="Tettelin H."/>
            <person name="Tallon L.J."/>
            <person name="Sullivan S."/>
            <person name="Wieler L.H."/>
            <person name="Ewers C."/>
            <person name="Pickard D."/>
            <person name="Dougan G."/>
            <person name="Fontana M.R."/>
            <person name="Rappuoli R."/>
            <person name="Pizza M."/>
            <person name="Serino L."/>
        </authorList>
    </citation>
    <scope>NUCLEOTIDE SEQUENCE [LARGE SCALE GENOMIC DNA]</scope>
    <source>
        <strain>IHE3034 / ExPEC</strain>
    </source>
</reference>
<reference key="2">
    <citation type="journal article" date="2010" name="Microbiology">
        <title>Mat fimbriae promote biofilm formation by meningitis-associated Escherichia coli.</title>
        <authorList>
            <person name="Lehti T.A."/>
            <person name="Bauchart P."/>
            <person name="Heikkinen J."/>
            <person name="Hacker J."/>
            <person name="Korhonen T.K."/>
            <person name="Dobrindt U."/>
            <person name="Westerlund-Wikstrom B."/>
        </authorList>
    </citation>
    <scope>FUNCTION</scope>
    <scope>DISRUPTION PHENOTYPE</scope>
    <source>
        <strain>IHE3034 / ExPEC</strain>
    </source>
</reference>